<feature type="chain" id="PRO_0000229062" description="1-(5-phosphoribosyl)-5-[(5-phosphoribosylamino)methylideneamino] imidazole-4-carboxamide isomerase">
    <location>
        <begin position="1"/>
        <end position="245"/>
    </location>
</feature>
<feature type="active site" description="Proton acceptor" evidence="1">
    <location>
        <position position="8"/>
    </location>
</feature>
<feature type="active site" description="Proton donor" evidence="1">
    <location>
        <position position="131"/>
    </location>
</feature>
<reference key="1">
    <citation type="submission" date="2003-03" db="EMBL/GenBank/DDBJ databases">
        <title>The complete genome sequence of Neisseria gonorrhoeae.</title>
        <authorList>
            <person name="Lewis L.A."/>
            <person name="Gillaspy A.F."/>
            <person name="McLaughlin R.E."/>
            <person name="Gipson M."/>
            <person name="Ducey T.F."/>
            <person name="Ownbey T."/>
            <person name="Hartman K."/>
            <person name="Nydick C."/>
            <person name="Carson M.B."/>
            <person name="Vaughn J."/>
            <person name="Thomson C."/>
            <person name="Song L."/>
            <person name="Lin S."/>
            <person name="Yuan X."/>
            <person name="Najar F."/>
            <person name="Zhan M."/>
            <person name="Ren Q."/>
            <person name="Zhu H."/>
            <person name="Qi S."/>
            <person name="Kenton S.M."/>
            <person name="Lai H."/>
            <person name="White J.D."/>
            <person name="Clifton S."/>
            <person name="Roe B.A."/>
            <person name="Dyer D.W."/>
        </authorList>
    </citation>
    <scope>NUCLEOTIDE SEQUENCE [LARGE SCALE GENOMIC DNA]</scope>
    <source>
        <strain>ATCC 700825 / FA 1090</strain>
    </source>
</reference>
<proteinExistence type="inferred from homology"/>
<comment type="catalytic activity">
    <reaction evidence="1">
        <text>1-(5-phospho-beta-D-ribosyl)-5-[(5-phospho-beta-D-ribosylamino)methylideneamino]imidazole-4-carboxamide = 5-[(5-phospho-1-deoxy-D-ribulos-1-ylimino)methylamino]-1-(5-phospho-beta-D-ribosyl)imidazole-4-carboxamide</text>
        <dbReference type="Rhea" id="RHEA:15469"/>
        <dbReference type="ChEBI" id="CHEBI:58435"/>
        <dbReference type="ChEBI" id="CHEBI:58525"/>
        <dbReference type="EC" id="5.3.1.16"/>
    </reaction>
</comment>
<comment type="pathway">
    <text evidence="1">Amino-acid biosynthesis; L-histidine biosynthesis; L-histidine from 5-phospho-alpha-D-ribose 1-diphosphate: step 4/9.</text>
</comment>
<comment type="subcellular location">
    <subcellularLocation>
        <location evidence="1">Cytoplasm</location>
    </subcellularLocation>
</comment>
<comment type="similarity">
    <text evidence="1">Belongs to the HisA/HisF family.</text>
</comment>
<keyword id="KW-0028">Amino-acid biosynthesis</keyword>
<keyword id="KW-0963">Cytoplasm</keyword>
<keyword id="KW-0368">Histidine biosynthesis</keyword>
<keyword id="KW-0413">Isomerase</keyword>
<keyword id="KW-1185">Reference proteome</keyword>
<protein>
    <recommendedName>
        <fullName evidence="1">1-(5-phosphoribosyl)-5-[(5-phosphoribosylamino)methylideneamino] imidazole-4-carboxamide isomerase</fullName>
        <ecNumber evidence="1">5.3.1.16</ecNumber>
    </recommendedName>
    <alternativeName>
        <fullName evidence="1">Phosphoribosylformimino-5-aminoimidazole carboxamide ribotide isomerase</fullName>
    </alternativeName>
</protein>
<accession>Q5FA22</accession>
<evidence type="ECO:0000255" key="1">
    <source>
        <dbReference type="HAMAP-Rule" id="MF_01014"/>
    </source>
</evidence>
<sequence>MLLIPAIDLKEGRCVRLKQGLMEEATVFSDSPADTALHWFEQGARRLHLVDLNGAFAGVPQNLPAIKDILAAVAKDIPVQLGGGMRDLKTIGQYLDLGLNDVIIGTAAVKNPDLVREACKAFPGRIIVGLDAKDGMAAIDGWATVTGHHVIDLAKRFEDDGVNSIIYTDIGRDGMMSGVNIDATVKLAQSVRIPVIASGGLTGLDDIRALCAAEKHGVAGAITGRAIYEGSIDFAQAQQLADSLD</sequence>
<dbReference type="EC" id="5.3.1.16" evidence="1"/>
<dbReference type="EMBL" id="AE004969">
    <property type="protein sequence ID" value="AAW88965.1"/>
    <property type="molecule type" value="Genomic_DNA"/>
</dbReference>
<dbReference type="RefSeq" id="WP_003687535.1">
    <property type="nucleotide sequence ID" value="NC_002946.2"/>
</dbReference>
<dbReference type="RefSeq" id="YP_207377.1">
    <property type="nucleotide sequence ID" value="NC_002946.2"/>
</dbReference>
<dbReference type="SMR" id="Q5FA22"/>
<dbReference type="STRING" id="242231.NGO_0212"/>
<dbReference type="GeneID" id="66752543"/>
<dbReference type="KEGG" id="ngo:NGO_0212"/>
<dbReference type="PATRIC" id="fig|242231.10.peg.263"/>
<dbReference type="HOGENOM" id="CLU_048577_1_1_4"/>
<dbReference type="UniPathway" id="UPA00031">
    <property type="reaction ID" value="UER00009"/>
</dbReference>
<dbReference type="Proteomes" id="UP000000535">
    <property type="component" value="Chromosome"/>
</dbReference>
<dbReference type="GO" id="GO:0005737">
    <property type="term" value="C:cytoplasm"/>
    <property type="evidence" value="ECO:0007669"/>
    <property type="project" value="UniProtKB-SubCell"/>
</dbReference>
<dbReference type="GO" id="GO:0003949">
    <property type="term" value="F:1-(5-phosphoribosyl)-5-[(5-phosphoribosylamino)methylideneamino]imidazole-4-carboxamide isomerase activity"/>
    <property type="evidence" value="ECO:0007669"/>
    <property type="project" value="UniProtKB-UniRule"/>
</dbReference>
<dbReference type="GO" id="GO:0000105">
    <property type="term" value="P:L-histidine biosynthetic process"/>
    <property type="evidence" value="ECO:0007669"/>
    <property type="project" value="UniProtKB-UniRule"/>
</dbReference>
<dbReference type="GO" id="GO:0000162">
    <property type="term" value="P:L-tryptophan biosynthetic process"/>
    <property type="evidence" value="ECO:0007669"/>
    <property type="project" value="TreeGrafter"/>
</dbReference>
<dbReference type="CDD" id="cd04732">
    <property type="entry name" value="HisA"/>
    <property type="match status" value="1"/>
</dbReference>
<dbReference type="FunFam" id="3.20.20.70:FF:000009">
    <property type="entry name" value="1-(5-phosphoribosyl)-5-[(5-phosphoribosylamino)methylideneamino] imidazole-4-carboxamide isomerase"/>
    <property type="match status" value="1"/>
</dbReference>
<dbReference type="Gene3D" id="3.20.20.70">
    <property type="entry name" value="Aldolase class I"/>
    <property type="match status" value="1"/>
</dbReference>
<dbReference type="HAMAP" id="MF_01014">
    <property type="entry name" value="HisA"/>
    <property type="match status" value="1"/>
</dbReference>
<dbReference type="InterPro" id="IPR013785">
    <property type="entry name" value="Aldolase_TIM"/>
</dbReference>
<dbReference type="InterPro" id="IPR006062">
    <property type="entry name" value="His_biosynth"/>
</dbReference>
<dbReference type="InterPro" id="IPR006063">
    <property type="entry name" value="HisA_bact_arch"/>
</dbReference>
<dbReference type="InterPro" id="IPR044524">
    <property type="entry name" value="Isoase_HisA-like"/>
</dbReference>
<dbReference type="InterPro" id="IPR023016">
    <property type="entry name" value="Isoase_HisA-like_bact"/>
</dbReference>
<dbReference type="InterPro" id="IPR011060">
    <property type="entry name" value="RibuloseP-bd_barrel"/>
</dbReference>
<dbReference type="NCBIfam" id="TIGR00007">
    <property type="entry name" value="1-(5-phosphoribosyl)-5-[(5-phosphoribosylamino)methylideneamino]imidazole-4-carboxamide isomerase"/>
    <property type="match status" value="1"/>
</dbReference>
<dbReference type="NCBIfam" id="NF010112">
    <property type="entry name" value="PRK13585.1"/>
    <property type="match status" value="1"/>
</dbReference>
<dbReference type="PANTHER" id="PTHR43090">
    <property type="entry name" value="1-(5-PHOSPHORIBOSYL)-5-[(5-PHOSPHORIBOSYLAMINO)METHYLIDENEAMINO] IMIDAZOLE-4-CARBOXAMIDE ISOMERASE"/>
    <property type="match status" value="1"/>
</dbReference>
<dbReference type="PANTHER" id="PTHR43090:SF2">
    <property type="entry name" value="1-(5-PHOSPHORIBOSYL)-5-[(5-PHOSPHORIBOSYLAMINO)METHYLIDENEAMINO] IMIDAZOLE-4-CARBOXAMIDE ISOMERASE"/>
    <property type="match status" value="1"/>
</dbReference>
<dbReference type="Pfam" id="PF00977">
    <property type="entry name" value="His_biosynth"/>
    <property type="match status" value="1"/>
</dbReference>
<dbReference type="SUPFAM" id="SSF51366">
    <property type="entry name" value="Ribulose-phoshate binding barrel"/>
    <property type="match status" value="1"/>
</dbReference>
<gene>
    <name evidence="1" type="primary">hisA</name>
    <name type="ordered locus">NGO_0212</name>
</gene>
<name>HIS4_NEIG1</name>
<organism>
    <name type="scientific">Neisseria gonorrhoeae (strain ATCC 700825 / FA 1090)</name>
    <dbReference type="NCBI Taxonomy" id="242231"/>
    <lineage>
        <taxon>Bacteria</taxon>
        <taxon>Pseudomonadati</taxon>
        <taxon>Pseudomonadota</taxon>
        <taxon>Betaproteobacteria</taxon>
        <taxon>Neisseriales</taxon>
        <taxon>Neisseriaceae</taxon>
        <taxon>Neisseria</taxon>
    </lineage>
</organism>